<proteinExistence type="inferred from homology"/>
<feature type="chain" id="PRO_1000086422" description="Large ribosomal subunit protein uL3">
    <location>
        <begin position="1"/>
        <end position="212"/>
    </location>
</feature>
<feature type="region of interest" description="Disordered" evidence="2">
    <location>
        <begin position="129"/>
        <end position="156"/>
    </location>
</feature>
<feature type="compositionally biased region" description="Low complexity" evidence="2">
    <location>
        <begin position="142"/>
        <end position="153"/>
    </location>
</feature>
<sequence>MSVGILGTKLGMTQVFDEAGRAIPVTVVQAGPCPVTQIKTAQTDGYTAIQIGYGSTTEKALTRPELGHLKKSGSTPVRHLQEYRLADVSEYELGQSISADLFSEGQLVDISGTSIGRGFAGYQKRHNFRRGPMGHGSKNHRAPGSTGAGTTPGRIYPGKRMAGQMGNVKKTIRKLTVVRVDAERNVLLIKGSVPGKPGALLNIQPATIVGES</sequence>
<reference key="1">
    <citation type="journal article" date="2008" name="Proc. Natl. Acad. Sci. U.S.A.">
        <title>Niche adaptation and genome expansion in the chlorophyll d-producing cyanobacterium Acaryochloris marina.</title>
        <authorList>
            <person name="Swingley W.D."/>
            <person name="Chen M."/>
            <person name="Cheung P.C."/>
            <person name="Conrad A.L."/>
            <person name="Dejesa L.C."/>
            <person name="Hao J."/>
            <person name="Honchak B.M."/>
            <person name="Karbach L.E."/>
            <person name="Kurdoglu A."/>
            <person name="Lahiri S."/>
            <person name="Mastrian S.D."/>
            <person name="Miyashita H."/>
            <person name="Page L."/>
            <person name="Ramakrishna P."/>
            <person name="Satoh S."/>
            <person name="Sattley W.M."/>
            <person name="Shimada Y."/>
            <person name="Taylor H.L."/>
            <person name="Tomo T."/>
            <person name="Tsuchiya T."/>
            <person name="Wang Z.T."/>
            <person name="Raymond J."/>
            <person name="Mimuro M."/>
            <person name="Blankenship R.E."/>
            <person name="Touchman J.W."/>
        </authorList>
    </citation>
    <scope>NUCLEOTIDE SEQUENCE [LARGE SCALE GENOMIC DNA]</scope>
    <source>
        <strain>MBIC 11017</strain>
    </source>
</reference>
<accession>B0C1D3</accession>
<protein>
    <recommendedName>
        <fullName evidence="1">Large ribosomal subunit protein uL3</fullName>
    </recommendedName>
    <alternativeName>
        <fullName evidence="3">50S ribosomal protein L3</fullName>
    </alternativeName>
</protein>
<organism>
    <name type="scientific">Acaryochloris marina (strain MBIC 11017)</name>
    <dbReference type="NCBI Taxonomy" id="329726"/>
    <lineage>
        <taxon>Bacteria</taxon>
        <taxon>Bacillati</taxon>
        <taxon>Cyanobacteriota</taxon>
        <taxon>Cyanophyceae</taxon>
        <taxon>Acaryochloridales</taxon>
        <taxon>Acaryochloridaceae</taxon>
        <taxon>Acaryochloris</taxon>
    </lineage>
</organism>
<keyword id="KW-1185">Reference proteome</keyword>
<keyword id="KW-0687">Ribonucleoprotein</keyword>
<keyword id="KW-0689">Ribosomal protein</keyword>
<keyword id="KW-0694">RNA-binding</keyword>
<keyword id="KW-0699">rRNA-binding</keyword>
<evidence type="ECO:0000255" key="1">
    <source>
        <dbReference type="HAMAP-Rule" id="MF_01325"/>
    </source>
</evidence>
<evidence type="ECO:0000256" key="2">
    <source>
        <dbReference type="SAM" id="MobiDB-lite"/>
    </source>
</evidence>
<evidence type="ECO:0000305" key="3"/>
<gene>
    <name evidence="1" type="primary">rplC</name>
    <name evidence="1" type="synonym">rpl3</name>
    <name type="ordered locus">AM1_4696</name>
</gene>
<dbReference type="EMBL" id="CP000828">
    <property type="protein sequence ID" value="ABW29668.1"/>
    <property type="molecule type" value="Genomic_DNA"/>
</dbReference>
<dbReference type="RefSeq" id="WP_012164967.1">
    <property type="nucleotide sequence ID" value="NC_009925.1"/>
</dbReference>
<dbReference type="SMR" id="B0C1D3"/>
<dbReference type="STRING" id="329726.AM1_4696"/>
<dbReference type="KEGG" id="amr:AM1_4696"/>
<dbReference type="eggNOG" id="COG0087">
    <property type="taxonomic scope" value="Bacteria"/>
</dbReference>
<dbReference type="HOGENOM" id="CLU_044142_4_1_3"/>
<dbReference type="OrthoDB" id="9806135at2"/>
<dbReference type="Proteomes" id="UP000000268">
    <property type="component" value="Chromosome"/>
</dbReference>
<dbReference type="GO" id="GO:0022625">
    <property type="term" value="C:cytosolic large ribosomal subunit"/>
    <property type="evidence" value="ECO:0007669"/>
    <property type="project" value="TreeGrafter"/>
</dbReference>
<dbReference type="GO" id="GO:0019843">
    <property type="term" value="F:rRNA binding"/>
    <property type="evidence" value="ECO:0007669"/>
    <property type="project" value="UniProtKB-UniRule"/>
</dbReference>
<dbReference type="GO" id="GO:0003735">
    <property type="term" value="F:structural constituent of ribosome"/>
    <property type="evidence" value="ECO:0007669"/>
    <property type="project" value="InterPro"/>
</dbReference>
<dbReference type="GO" id="GO:0006412">
    <property type="term" value="P:translation"/>
    <property type="evidence" value="ECO:0007669"/>
    <property type="project" value="UniProtKB-UniRule"/>
</dbReference>
<dbReference type="FunFam" id="3.30.160.810:FF:000001">
    <property type="entry name" value="50S ribosomal protein L3"/>
    <property type="match status" value="1"/>
</dbReference>
<dbReference type="FunFam" id="2.40.30.10:FF:000065">
    <property type="entry name" value="50S ribosomal protein L3, chloroplastic"/>
    <property type="match status" value="1"/>
</dbReference>
<dbReference type="Gene3D" id="3.30.160.810">
    <property type="match status" value="1"/>
</dbReference>
<dbReference type="Gene3D" id="2.40.30.10">
    <property type="entry name" value="Translation factors"/>
    <property type="match status" value="1"/>
</dbReference>
<dbReference type="HAMAP" id="MF_01325_B">
    <property type="entry name" value="Ribosomal_uL3_B"/>
    <property type="match status" value="1"/>
</dbReference>
<dbReference type="InterPro" id="IPR000597">
    <property type="entry name" value="Ribosomal_uL3"/>
</dbReference>
<dbReference type="InterPro" id="IPR019927">
    <property type="entry name" value="Ribosomal_uL3_bac/org-type"/>
</dbReference>
<dbReference type="InterPro" id="IPR019926">
    <property type="entry name" value="Ribosomal_uL3_CS"/>
</dbReference>
<dbReference type="InterPro" id="IPR009000">
    <property type="entry name" value="Transl_B-barrel_sf"/>
</dbReference>
<dbReference type="NCBIfam" id="TIGR03625">
    <property type="entry name" value="L3_bact"/>
    <property type="match status" value="1"/>
</dbReference>
<dbReference type="PANTHER" id="PTHR11229">
    <property type="entry name" value="50S RIBOSOMAL PROTEIN L3"/>
    <property type="match status" value="1"/>
</dbReference>
<dbReference type="PANTHER" id="PTHR11229:SF16">
    <property type="entry name" value="LARGE RIBOSOMAL SUBUNIT PROTEIN UL3C"/>
    <property type="match status" value="1"/>
</dbReference>
<dbReference type="Pfam" id="PF00297">
    <property type="entry name" value="Ribosomal_L3"/>
    <property type="match status" value="1"/>
</dbReference>
<dbReference type="SUPFAM" id="SSF50447">
    <property type="entry name" value="Translation proteins"/>
    <property type="match status" value="1"/>
</dbReference>
<dbReference type="PROSITE" id="PS00474">
    <property type="entry name" value="RIBOSOMAL_L3"/>
    <property type="match status" value="1"/>
</dbReference>
<name>RL3_ACAM1</name>
<comment type="function">
    <text evidence="1">One of the primary rRNA binding proteins, it binds directly near the 3'-end of the 23S rRNA, where it nucleates assembly of the 50S subunit.</text>
</comment>
<comment type="subunit">
    <text evidence="1">Part of the 50S ribosomal subunit. Forms a cluster with proteins L14 and L19.</text>
</comment>
<comment type="similarity">
    <text evidence="1">Belongs to the universal ribosomal protein uL3 family.</text>
</comment>